<protein>
    <recommendedName>
        <fullName evidence="1">Zinc import ATP-binding protein ZnuC</fullName>
        <ecNumber evidence="1">7.2.2.20</ecNumber>
    </recommendedName>
</protein>
<organism>
    <name type="scientific">Magnetococcus marinus (strain ATCC BAA-1437 / JCM 17883 / MC-1)</name>
    <dbReference type="NCBI Taxonomy" id="156889"/>
    <lineage>
        <taxon>Bacteria</taxon>
        <taxon>Pseudomonadati</taxon>
        <taxon>Pseudomonadota</taxon>
        <taxon>Alphaproteobacteria</taxon>
        <taxon>Magnetococcales</taxon>
        <taxon>Magnetococcaceae</taxon>
        <taxon>Magnetococcus</taxon>
    </lineage>
</organism>
<feature type="chain" id="PRO_0000281515" description="Zinc import ATP-binding protein ZnuC">
    <location>
        <begin position="1"/>
        <end position="260"/>
    </location>
</feature>
<feature type="domain" description="ABC transporter" evidence="1">
    <location>
        <begin position="14"/>
        <end position="229"/>
    </location>
</feature>
<feature type="binding site" evidence="1">
    <location>
        <begin position="46"/>
        <end position="53"/>
    </location>
    <ligand>
        <name>ATP</name>
        <dbReference type="ChEBI" id="CHEBI:30616"/>
    </ligand>
</feature>
<accession>A0LCH8</accession>
<name>ZNUC_MAGMM</name>
<keyword id="KW-0067">ATP-binding</keyword>
<keyword id="KW-0997">Cell inner membrane</keyword>
<keyword id="KW-1003">Cell membrane</keyword>
<keyword id="KW-0406">Ion transport</keyword>
<keyword id="KW-0472">Membrane</keyword>
<keyword id="KW-0547">Nucleotide-binding</keyword>
<keyword id="KW-1185">Reference proteome</keyword>
<keyword id="KW-1278">Translocase</keyword>
<keyword id="KW-0813">Transport</keyword>
<keyword id="KW-0862">Zinc</keyword>
<keyword id="KW-0864">Zinc transport</keyword>
<dbReference type="EC" id="7.2.2.20" evidence="1"/>
<dbReference type="EMBL" id="CP000471">
    <property type="protein sequence ID" value="ABK45671.1"/>
    <property type="molecule type" value="Genomic_DNA"/>
</dbReference>
<dbReference type="RefSeq" id="WP_011714734.1">
    <property type="nucleotide sequence ID" value="NC_008576.1"/>
</dbReference>
<dbReference type="SMR" id="A0LCH8"/>
<dbReference type="STRING" id="156889.Mmc1_3181"/>
<dbReference type="KEGG" id="mgm:Mmc1_3181"/>
<dbReference type="eggNOG" id="COG1121">
    <property type="taxonomic scope" value="Bacteria"/>
</dbReference>
<dbReference type="HOGENOM" id="CLU_000604_1_11_5"/>
<dbReference type="OrthoDB" id="9806726at2"/>
<dbReference type="Proteomes" id="UP000002586">
    <property type="component" value="Chromosome"/>
</dbReference>
<dbReference type="GO" id="GO:0005886">
    <property type="term" value="C:plasma membrane"/>
    <property type="evidence" value="ECO:0007669"/>
    <property type="project" value="UniProtKB-SubCell"/>
</dbReference>
<dbReference type="GO" id="GO:0015633">
    <property type="term" value="F:ABC-type zinc transporter activity"/>
    <property type="evidence" value="ECO:0007669"/>
    <property type="project" value="UniProtKB-EC"/>
</dbReference>
<dbReference type="GO" id="GO:0005524">
    <property type="term" value="F:ATP binding"/>
    <property type="evidence" value="ECO:0007669"/>
    <property type="project" value="UniProtKB-KW"/>
</dbReference>
<dbReference type="GO" id="GO:0016887">
    <property type="term" value="F:ATP hydrolysis activity"/>
    <property type="evidence" value="ECO:0007669"/>
    <property type="project" value="InterPro"/>
</dbReference>
<dbReference type="GO" id="GO:0010043">
    <property type="term" value="P:response to zinc ion"/>
    <property type="evidence" value="ECO:0007669"/>
    <property type="project" value="TreeGrafter"/>
</dbReference>
<dbReference type="FunFam" id="3.40.50.300:FF:000392">
    <property type="entry name" value="Zinc import ATP-binding protein ZnuC"/>
    <property type="match status" value="1"/>
</dbReference>
<dbReference type="Gene3D" id="3.40.50.300">
    <property type="entry name" value="P-loop containing nucleotide triphosphate hydrolases"/>
    <property type="match status" value="1"/>
</dbReference>
<dbReference type="InterPro" id="IPR003593">
    <property type="entry name" value="AAA+_ATPase"/>
</dbReference>
<dbReference type="InterPro" id="IPR003439">
    <property type="entry name" value="ABC_transporter-like_ATP-bd"/>
</dbReference>
<dbReference type="InterPro" id="IPR017871">
    <property type="entry name" value="ABC_transporter-like_CS"/>
</dbReference>
<dbReference type="InterPro" id="IPR050153">
    <property type="entry name" value="Metal_Ion_Import_ABC"/>
</dbReference>
<dbReference type="InterPro" id="IPR027417">
    <property type="entry name" value="P-loop_NTPase"/>
</dbReference>
<dbReference type="PANTHER" id="PTHR42734">
    <property type="entry name" value="METAL TRANSPORT SYSTEM ATP-BINDING PROTEIN TM_0124-RELATED"/>
    <property type="match status" value="1"/>
</dbReference>
<dbReference type="PANTHER" id="PTHR42734:SF9">
    <property type="entry name" value="ZINC IMPORT ATP-BINDING PROTEIN ZNUC"/>
    <property type="match status" value="1"/>
</dbReference>
<dbReference type="Pfam" id="PF00005">
    <property type="entry name" value="ABC_tran"/>
    <property type="match status" value="1"/>
</dbReference>
<dbReference type="SMART" id="SM00382">
    <property type="entry name" value="AAA"/>
    <property type="match status" value="1"/>
</dbReference>
<dbReference type="SUPFAM" id="SSF52540">
    <property type="entry name" value="P-loop containing nucleoside triphosphate hydrolases"/>
    <property type="match status" value="1"/>
</dbReference>
<dbReference type="PROSITE" id="PS00211">
    <property type="entry name" value="ABC_TRANSPORTER_1"/>
    <property type="match status" value="1"/>
</dbReference>
<dbReference type="PROSITE" id="PS50893">
    <property type="entry name" value="ABC_TRANSPORTER_2"/>
    <property type="match status" value="1"/>
</dbReference>
<dbReference type="PROSITE" id="PS51298">
    <property type="entry name" value="ZNUC"/>
    <property type="match status" value="1"/>
</dbReference>
<sequence>MSDTSLTHCSEVLLTARNLCADRGGRRVLEGIDLSIGAGEVVTIIGPNGAGKSTLLKVLLGVEPYSEGQVIRKANLCVGYVPQRMPVDAILPMTVQRMLRLAKEVDETAMLAVLEETGVAHVLHAPLQGLSGGEFQRVLLARAMLRNPQLLVLDEPVQGVDYSGEVALYQLIGALRKRHGCGVLLVSHDLHMVMRDTDRVVCLNRHICCTGTPDHVSGHPEFARLFGDQALQTLALYQHHHHSCTHHMPVDVAIDPQEQA</sequence>
<evidence type="ECO:0000255" key="1">
    <source>
        <dbReference type="HAMAP-Rule" id="MF_01725"/>
    </source>
</evidence>
<gene>
    <name evidence="1" type="primary">znuC</name>
    <name type="ordered locus">Mmc1_3181</name>
</gene>
<reference key="1">
    <citation type="journal article" date="2009" name="Appl. Environ. Microbiol.">
        <title>Complete genome sequence of the chemolithoautotrophic marine magnetotactic coccus strain MC-1.</title>
        <authorList>
            <person name="Schubbe S."/>
            <person name="Williams T.J."/>
            <person name="Xie G."/>
            <person name="Kiss H.E."/>
            <person name="Brettin T.S."/>
            <person name="Martinez D."/>
            <person name="Ross C.A."/>
            <person name="Schuler D."/>
            <person name="Cox B.L."/>
            <person name="Nealson K.H."/>
            <person name="Bazylinski D.A."/>
        </authorList>
    </citation>
    <scope>NUCLEOTIDE SEQUENCE [LARGE SCALE GENOMIC DNA]</scope>
    <source>
        <strain>ATCC BAA-1437 / JCM 17883 / MC-1</strain>
    </source>
</reference>
<proteinExistence type="inferred from homology"/>
<comment type="function">
    <text evidence="1">Part of the ABC transporter complex ZnuABC involved in zinc import. Responsible for energy coupling to the transport system.</text>
</comment>
<comment type="catalytic activity">
    <reaction evidence="1">
        <text>Zn(2+)(out) + ATP(in) + H2O(in) = Zn(2+)(in) + ADP(in) + phosphate(in) + H(+)(in)</text>
        <dbReference type="Rhea" id="RHEA:29795"/>
        <dbReference type="ChEBI" id="CHEBI:15377"/>
        <dbReference type="ChEBI" id="CHEBI:15378"/>
        <dbReference type="ChEBI" id="CHEBI:29105"/>
        <dbReference type="ChEBI" id="CHEBI:30616"/>
        <dbReference type="ChEBI" id="CHEBI:43474"/>
        <dbReference type="ChEBI" id="CHEBI:456216"/>
        <dbReference type="EC" id="7.2.2.20"/>
    </reaction>
</comment>
<comment type="subunit">
    <text evidence="1">The complex is composed of two ATP-binding proteins (ZnuC), two transmembrane proteins (ZnuB) and a solute-binding protein (ZnuA).</text>
</comment>
<comment type="subcellular location">
    <subcellularLocation>
        <location evidence="1">Cell inner membrane</location>
        <topology evidence="1">Peripheral membrane protein</topology>
    </subcellularLocation>
</comment>
<comment type="similarity">
    <text evidence="1">Belongs to the ABC transporter superfamily. Zinc importer (TC 3.A.1.15.5) family.</text>
</comment>